<protein>
    <recommendedName>
        <fullName evidence="6">Abscisic acid 8'-hydroxylase CYP707A2</fullName>
        <shortName evidence="6">ABA 8'-hydroxylase CYP707A2</shortName>
        <shortName evidence="5">SlCYP707A2</shortName>
        <ecNumber evidence="1">1.14.14.137</ecNumber>
    </recommendedName>
    <alternativeName>
        <fullName evidence="5">Cytochrome P450 707A2</fullName>
    </alternativeName>
</protein>
<name>ABAH2_SOLLC</name>
<evidence type="ECO:0000250" key="1">
    <source>
        <dbReference type="UniProtKB" id="Q949P1"/>
    </source>
</evidence>
<evidence type="ECO:0000250" key="2">
    <source>
        <dbReference type="UniProtKB" id="Q96242"/>
    </source>
</evidence>
<evidence type="ECO:0000255" key="3"/>
<evidence type="ECO:0000269" key="4">
    <source>
    </source>
</evidence>
<evidence type="ECO:0000303" key="5">
    <source>
    </source>
</evidence>
<evidence type="ECO:0000305" key="6"/>
<feature type="chain" id="PRO_0000445690" description="Abscisic acid 8'-hydroxylase CYP707A2">
    <location>
        <begin position="1"/>
        <end position="469"/>
    </location>
</feature>
<feature type="transmembrane region" description="Helical" evidence="3">
    <location>
        <begin position="3"/>
        <end position="23"/>
    </location>
</feature>
<feature type="binding site" description="axial binding residue" evidence="2">
    <location>
        <position position="414"/>
    </location>
    <ligand>
        <name>heme</name>
        <dbReference type="ChEBI" id="CHEBI:30413"/>
    </ligand>
    <ligandPart>
        <name>Fe</name>
        <dbReference type="ChEBI" id="CHEBI:18248"/>
    </ligandPart>
</feature>
<proteinExistence type="evidence at transcript level"/>
<accession>K4CI52</accession>
<accession>G3CKB8</accession>
<sequence>MEFVSMLCLFTFISLTLLLIHSIFKFLAFASKKLPLPPGTLGLPYIGETFQLYSQNPNVFFASKVKKYGSIFKTYILGCPCVMISSPEAAKQVLVTKANLFKPTFPASKERMLGKQAIFFHQGDYHAKLRKLVLQAFKPDSIRNIIPDIESIAITSLESFQGRLINTYQEMKTYTFNVALISIFGKDEFLYREELKKCYYILEKGYNSMPINLPGTLFNKAMKARKELAKIVAKIISTRREMKIDHGDLLGSFMGDKEGLTDEQIADNVIGVIFAARDTTASVLTWILKYLGENPSVLQAVTEEQENIMRKKEVNGEEKVLNWQDTRQMPMTTRVIQETLRVASILSFTFREAVEDVEFEGYLIPKGWKVLPLFRNIHHSPDNFPEPEKFDPSRFEVSPKPNTFMPFGNGVHSCPGNDLAKLEILILVHHLTTKYRWSMVGPQNGIQYGPFALPQNGLPIKLSLKTSST</sequence>
<reference key="1">
    <citation type="journal article" date="2012" name="Nature">
        <title>The tomato genome sequence provides insights into fleshy fruit evolution.</title>
        <authorList>
            <consortium name="Tomato Genome Consortium"/>
        </authorList>
    </citation>
    <scope>NUCLEOTIDE SEQUENCE [LARGE SCALE GENOMIC DNA]</scope>
    <source>
        <strain>cv. Heinz 1706</strain>
    </source>
</reference>
<reference key="2">
    <citation type="submission" date="2010-08" db="EMBL/GenBank/DDBJ databases">
        <title>Cloning and expression analysis of Solanum lycopersicum ABA 8'-hydroxylase CYP707A2 gene.</title>
        <authorList>
            <person name="Leng P."/>
            <person name="Sun L."/>
        </authorList>
    </citation>
    <scope>NUCLEOTIDE SEQUENCE [MRNA] OF 78-382</scope>
</reference>
<reference key="3">
    <citation type="journal article" date="2014" name="J. Exp. Bot.">
        <title>SlNCED1 and SlCYP707A2: key genes involved in ABA metabolism during tomato fruit ripening.</title>
        <authorList>
            <person name="Ji K."/>
            <person name="Kai W."/>
            <person name="Zhao B."/>
            <person name="Sun Y."/>
            <person name="Yuan B."/>
            <person name="Dai S."/>
            <person name="Li Q."/>
            <person name="Chen P."/>
            <person name="Wang Y."/>
            <person name="Pei Y."/>
            <person name="Wang H."/>
            <person name="Guo Y."/>
            <person name="Leng P."/>
        </authorList>
    </citation>
    <scope>FUNCTION</scope>
    <scope>DISRUPTION PHENOTYPE</scope>
    <scope>DEVELOPMENTAL STAGE</scope>
    <scope>TISSUE SPECIFICITY</scope>
    <scope>INDUCTION BY ABSCISIC ACID AND DEHYDRATION</scope>
    <scope>PATHWAY</scope>
    <source>
        <strain>cv. Jia Bao</strain>
    </source>
</reference>
<keyword id="KW-0349">Heme</keyword>
<keyword id="KW-0408">Iron</keyword>
<keyword id="KW-0472">Membrane</keyword>
<keyword id="KW-0479">Metal-binding</keyword>
<keyword id="KW-0503">Monooxygenase</keyword>
<keyword id="KW-0560">Oxidoreductase</keyword>
<keyword id="KW-1185">Reference proteome</keyword>
<keyword id="KW-0812">Transmembrane</keyword>
<keyword id="KW-1133">Transmembrane helix</keyword>
<dbReference type="EC" id="1.14.14.137" evidence="1"/>
<dbReference type="EMBL" id="CM001071">
    <property type="status" value="NOT_ANNOTATED_CDS"/>
    <property type="molecule type" value="Genomic_DNA"/>
</dbReference>
<dbReference type="EMBL" id="HQ008774">
    <property type="protein sequence ID" value="AEK99073.1"/>
    <property type="molecule type" value="mRNA"/>
</dbReference>
<dbReference type="RefSeq" id="NP_001362844.1">
    <property type="nucleotide sequence ID" value="NM_001375915.1"/>
</dbReference>
<dbReference type="RefSeq" id="XP_004244436.1">
    <property type="nucleotide sequence ID" value="XM_004244388.3"/>
</dbReference>
<dbReference type="SMR" id="K4CI52"/>
<dbReference type="FunCoup" id="K4CI52">
    <property type="interactions" value="164"/>
</dbReference>
<dbReference type="STRING" id="4081.K4CI52"/>
<dbReference type="PaxDb" id="4081-Solyc08g005610.2.1"/>
<dbReference type="EnsemblPlants" id="Solyc08g005610.3.1">
    <property type="protein sequence ID" value="Solyc08g005610.3.1"/>
    <property type="gene ID" value="Solyc08g005610.3"/>
</dbReference>
<dbReference type="GeneID" id="101249565"/>
<dbReference type="Gramene" id="Solyc08g005610.3.1">
    <property type="protein sequence ID" value="Solyc08g005610.3.1"/>
    <property type="gene ID" value="Solyc08g005610.3"/>
</dbReference>
<dbReference type="eggNOG" id="KOG0157">
    <property type="taxonomic scope" value="Eukaryota"/>
</dbReference>
<dbReference type="HOGENOM" id="CLU_001570_15_5_1"/>
<dbReference type="InParanoid" id="K4CI52"/>
<dbReference type="OMA" id="WDGQFVN"/>
<dbReference type="OrthoDB" id="1372046at2759"/>
<dbReference type="PhylomeDB" id="K4CI52"/>
<dbReference type="UniPathway" id="UPA00093"/>
<dbReference type="Proteomes" id="UP000004994">
    <property type="component" value="Chromosome 8"/>
</dbReference>
<dbReference type="ExpressionAtlas" id="K4CI52">
    <property type="expression patterns" value="baseline and differential"/>
</dbReference>
<dbReference type="GO" id="GO:0016020">
    <property type="term" value="C:membrane"/>
    <property type="evidence" value="ECO:0007669"/>
    <property type="project" value="UniProtKB-SubCell"/>
</dbReference>
<dbReference type="GO" id="GO:0010295">
    <property type="term" value="F:(+)-abscisic acid 8'-hydroxylase activity"/>
    <property type="evidence" value="ECO:0007669"/>
    <property type="project" value="UniProtKB-EC"/>
</dbReference>
<dbReference type="GO" id="GO:0020037">
    <property type="term" value="F:heme binding"/>
    <property type="evidence" value="ECO:0007669"/>
    <property type="project" value="InterPro"/>
</dbReference>
<dbReference type="GO" id="GO:0005506">
    <property type="term" value="F:iron ion binding"/>
    <property type="evidence" value="ECO:0007669"/>
    <property type="project" value="InterPro"/>
</dbReference>
<dbReference type="GO" id="GO:0016709">
    <property type="term" value="F:oxidoreductase activity, acting on paired donors, with incorporation or reduction of molecular oxygen, NAD(P)H as one donor, and incorporation of one atom of oxygen"/>
    <property type="evidence" value="ECO:0000318"/>
    <property type="project" value="GO_Central"/>
</dbReference>
<dbReference type="GO" id="GO:0046345">
    <property type="term" value="P:abscisic acid catabolic process"/>
    <property type="evidence" value="ECO:0000315"/>
    <property type="project" value="UniProtKB"/>
</dbReference>
<dbReference type="GO" id="GO:0009687">
    <property type="term" value="P:abscisic acid metabolic process"/>
    <property type="evidence" value="ECO:0000318"/>
    <property type="project" value="GO_Central"/>
</dbReference>
<dbReference type="GO" id="GO:0009835">
    <property type="term" value="P:fruit ripening"/>
    <property type="evidence" value="ECO:0000315"/>
    <property type="project" value="UniProtKB"/>
</dbReference>
<dbReference type="GO" id="GO:0009737">
    <property type="term" value="P:response to abscisic acid"/>
    <property type="evidence" value="ECO:0000270"/>
    <property type="project" value="UniProtKB"/>
</dbReference>
<dbReference type="GO" id="GO:0009414">
    <property type="term" value="P:response to water deprivation"/>
    <property type="evidence" value="ECO:0000270"/>
    <property type="project" value="UniProtKB"/>
</dbReference>
<dbReference type="CDD" id="cd11043">
    <property type="entry name" value="CYP90-like"/>
    <property type="match status" value="1"/>
</dbReference>
<dbReference type="FunFam" id="1.10.630.10:FF:000014">
    <property type="entry name" value="Abscisic acid 8"/>
    <property type="match status" value="1"/>
</dbReference>
<dbReference type="Gene3D" id="1.10.630.10">
    <property type="entry name" value="Cytochrome P450"/>
    <property type="match status" value="1"/>
</dbReference>
<dbReference type="InterPro" id="IPR001128">
    <property type="entry name" value="Cyt_P450"/>
</dbReference>
<dbReference type="InterPro" id="IPR017972">
    <property type="entry name" value="Cyt_P450_CS"/>
</dbReference>
<dbReference type="InterPro" id="IPR002401">
    <property type="entry name" value="Cyt_P450_E_grp-I"/>
</dbReference>
<dbReference type="InterPro" id="IPR036396">
    <property type="entry name" value="Cyt_P450_sf"/>
</dbReference>
<dbReference type="PANTHER" id="PTHR24286:SF249">
    <property type="entry name" value="ABSCISIC ACID 8'-HYDROXYLASE CYP707A2"/>
    <property type="match status" value="1"/>
</dbReference>
<dbReference type="PANTHER" id="PTHR24286">
    <property type="entry name" value="CYTOCHROME P450 26"/>
    <property type="match status" value="1"/>
</dbReference>
<dbReference type="Pfam" id="PF00067">
    <property type="entry name" value="p450"/>
    <property type="match status" value="1"/>
</dbReference>
<dbReference type="PRINTS" id="PR00463">
    <property type="entry name" value="EP450I"/>
</dbReference>
<dbReference type="PRINTS" id="PR00385">
    <property type="entry name" value="P450"/>
</dbReference>
<dbReference type="SUPFAM" id="SSF48264">
    <property type="entry name" value="Cytochrome P450"/>
    <property type="match status" value="1"/>
</dbReference>
<dbReference type="PROSITE" id="PS00086">
    <property type="entry name" value="CYTOCHROME_P450"/>
    <property type="match status" value="1"/>
</dbReference>
<comment type="function">
    <text evidence="4">Negative regulator of fruit ripening involved in the oxidative degradation of abscisic acid (ABA).</text>
</comment>
<comment type="catalytic activity">
    <reaction evidence="1">
        <text>2-cis-(+)-abscisate + reduced [NADPH--hemoprotein reductase] + O2 = (+)-8'-hydroxyabscisate + oxidized [NADPH--hemoprotein reductase] + H2O + H(+)</text>
        <dbReference type="Rhea" id="RHEA:12897"/>
        <dbReference type="Rhea" id="RHEA-COMP:11964"/>
        <dbReference type="Rhea" id="RHEA-COMP:11965"/>
        <dbReference type="ChEBI" id="CHEBI:15377"/>
        <dbReference type="ChEBI" id="CHEBI:15378"/>
        <dbReference type="ChEBI" id="CHEBI:15379"/>
        <dbReference type="ChEBI" id="CHEBI:37569"/>
        <dbReference type="ChEBI" id="CHEBI:57618"/>
        <dbReference type="ChEBI" id="CHEBI:58210"/>
        <dbReference type="ChEBI" id="CHEBI:58490"/>
        <dbReference type="EC" id="1.14.14.137"/>
    </reaction>
</comment>
<comment type="cofactor">
    <cofactor evidence="2">
        <name>heme</name>
        <dbReference type="ChEBI" id="CHEBI:30413"/>
    </cofactor>
</comment>
<comment type="pathway">
    <text evidence="4">Plant hormone degradation; abscisic acid degradation.</text>
</comment>
<comment type="subcellular location">
    <subcellularLocation>
        <location evidence="3">Membrane</location>
        <topology evidence="3">Single-pass membrane protein</topology>
    </subcellularLocation>
</comment>
<comment type="tissue specificity">
    <text evidence="4">Expressed at low levels in fruit.</text>
</comment>
<comment type="developmental stage">
    <text evidence="4">Fluctuant expression pattern with four peaks during development, and then it increased rapidly during ripening.</text>
</comment>
<comment type="induction">
    <text evidence="4">First transiently repressed (1 day after treatment) and later induced (2 days after treatment) by abscisic acid (ABA) and dehydration.</text>
</comment>
<comment type="disruption phenotype">
    <text evidence="4">Silenced plants fruits have a rapid ripening with a quick colouring and associated with higher abscisic acid (ABA) levels. When disrupted in fruits, altered expression of ABA-responsive and ripening-related genes.</text>
</comment>
<comment type="similarity">
    <text evidence="6">Belongs to the cytochrome P450 family.</text>
</comment>
<gene>
    <name evidence="5" type="primary">CYP707A2</name>
    <name evidence="6" type="ordered locus">Solyc08g005610.2.1</name>
</gene>
<organism>
    <name type="scientific">Solanum lycopersicum</name>
    <name type="common">Tomato</name>
    <name type="synonym">Lycopersicon esculentum</name>
    <dbReference type="NCBI Taxonomy" id="4081"/>
    <lineage>
        <taxon>Eukaryota</taxon>
        <taxon>Viridiplantae</taxon>
        <taxon>Streptophyta</taxon>
        <taxon>Embryophyta</taxon>
        <taxon>Tracheophyta</taxon>
        <taxon>Spermatophyta</taxon>
        <taxon>Magnoliopsida</taxon>
        <taxon>eudicotyledons</taxon>
        <taxon>Gunneridae</taxon>
        <taxon>Pentapetalae</taxon>
        <taxon>asterids</taxon>
        <taxon>lamiids</taxon>
        <taxon>Solanales</taxon>
        <taxon>Solanaceae</taxon>
        <taxon>Solanoideae</taxon>
        <taxon>Solaneae</taxon>
        <taxon>Solanum</taxon>
        <taxon>Solanum subgen. Lycopersicon</taxon>
    </lineage>
</organism>